<accession>Q2S2D3</accession>
<evidence type="ECO:0000255" key="1">
    <source>
        <dbReference type="HAMAP-Rule" id="MF_00110"/>
    </source>
</evidence>
<comment type="function">
    <text evidence="1">Catalyzes the conversion of 3-deoxy-D-arabino-heptulosonate 7-phosphate (DAHP) to dehydroquinate (DHQ).</text>
</comment>
<comment type="catalytic activity">
    <reaction evidence="1">
        <text>7-phospho-2-dehydro-3-deoxy-D-arabino-heptonate = 3-dehydroquinate + phosphate</text>
        <dbReference type="Rhea" id="RHEA:21968"/>
        <dbReference type="ChEBI" id="CHEBI:32364"/>
        <dbReference type="ChEBI" id="CHEBI:43474"/>
        <dbReference type="ChEBI" id="CHEBI:58394"/>
        <dbReference type="EC" id="4.2.3.4"/>
    </reaction>
</comment>
<comment type="cofactor">
    <cofactor evidence="1">
        <name>Co(2+)</name>
        <dbReference type="ChEBI" id="CHEBI:48828"/>
    </cofactor>
    <cofactor evidence="1">
        <name>Zn(2+)</name>
        <dbReference type="ChEBI" id="CHEBI:29105"/>
    </cofactor>
    <text evidence="1">Binds 1 divalent metal cation per subunit. Can use either Co(2+) or Zn(2+).</text>
</comment>
<comment type="cofactor">
    <cofactor evidence="1">
        <name>NAD(+)</name>
        <dbReference type="ChEBI" id="CHEBI:57540"/>
    </cofactor>
</comment>
<comment type="pathway">
    <text evidence="1">Metabolic intermediate biosynthesis; chorismate biosynthesis; chorismate from D-erythrose 4-phosphate and phosphoenolpyruvate: step 2/7.</text>
</comment>
<comment type="subcellular location">
    <subcellularLocation>
        <location evidence="1">Cytoplasm</location>
    </subcellularLocation>
</comment>
<comment type="similarity">
    <text evidence="1">Belongs to the sugar phosphate cyclases superfamily. Dehydroquinate synthase family.</text>
</comment>
<proteinExistence type="inferred from homology"/>
<sequence>MPSPLAPMAVFVDLDERSYTVHFDSLATVPSLLEDVGLAAGRCLLVTDENVARHYKTPLIEGLSNAGWTVRSLVLPPGEQTKSASCLHRIYDDALAWGIDRQTPVLALGGGVVGDLAGFAAATLLRGLPLVQLPTSLLAQVDASVGGKTAINHDTGKNLIGAFYQPELVCADPQTLDTLPMREYTSGMAEVIKHALIRAPDLFEALEDHLVPVMARKDREIVSSVIEDAVGVKADVVSADEREEGRRAILNFGHTFAHALERVAGYGAFTHGEAVAIGMRAGLYLSHQRHPEAVPRERLDHVIRAVPIESDPAEVPFPDLYAAMAADKKNEGGTIRFVLLEQLGQAYVTGDVTEADARHAWQFACSN</sequence>
<feature type="chain" id="PRO_1000119089" description="3-dehydroquinate synthase">
    <location>
        <begin position="1"/>
        <end position="367"/>
    </location>
</feature>
<feature type="binding site" evidence="1">
    <location>
        <begin position="111"/>
        <end position="115"/>
    </location>
    <ligand>
        <name>NAD(+)</name>
        <dbReference type="ChEBI" id="CHEBI:57540"/>
    </ligand>
</feature>
<feature type="binding site" evidence="1">
    <location>
        <begin position="135"/>
        <end position="136"/>
    </location>
    <ligand>
        <name>NAD(+)</name>
        <dbReference type="ChEBI" id="CHEBI:57540"/>
    </ligand>
</feature>
<feature type="binding site" evidence="1">
    <location>
        <position position="148"/>
    </location>
    <ligand>
        <name>NAD(+)</name>
        <dbReference type="ChEBI" id="CHEBI:57540"/>
    </ligand>
</feature>
<feature type="binding site" evidence="1">
    <location>
        <position position="157"/>
    </location>
    <ligand>
        <name>NAD(+)</name>
        <dbReference type="ChEBI" id="CHEBI:57540"/>
    </ligand>
</feature>
<feature type="binding site" evidence="1">
    <location>
        <begin position="175"/>
        <end position="178"/>
    </location>
    <ligand>
        <name>NAD(+)</name>
        <dbReference type="ChEBI" id="CHEBI:57540"/>
    </ligand>
</feature>
<feature type="binding site" evidence="1">
    <location>
        <position position="190"/>
    </location>
    <ligand>
        <name>Zn(2+)</name>
        <dbReference type="ChEBI" id="CHEBI:29105"/>
    </ligand>
</feature>
<feature type="binding site" evidence="1">
    <location>
        <position position="254"/>
    </location>
    <ligand>
        <name>Zn(2+)</name>
        <dbReference type="ChEBI" id="CHEBI:29105"/>
    </ligand>
</feature>
<feature type="binding site" evidence="1">
    <location>
        <position position="271"/>
    </location>
    <ligand>
        <name>Zn(2+)</name>
        <dbReference type="ChEBI" id="CHEBI:29105"/>
    </ligand>
</feature>
<name>AROB_SALRD</name>
<reference key="1">
    <citation type="journal article" date="2005" name="Proc. Natl. Acad. Sci. U.S.A.">
        <title>The genome of Salinibacter ruber: convergence and gene exchange among hyperhalophilic bacteria and archaea.</title>
        <authorList>
            <person name="Mongodin E.F."/>
            <person name="Nelson K.E."/>
            <person name="Daugherty S."/>
            <person name="DeBoy R.T."/>
            <person name="Wister J."/>
            <person name="Khouri H."/>
            <person name="Weidman J."/>
            <person name="Walsh D.A."/>
            <person name="Papke R.T."/>
            <person name="Sanchez Perez G."/>
            <person name="Sharma A.K."/>
            <person name="Nesbo C.L."/>
            <person name="MacLeod D."/>
            <person name="Bapteste E."/>
            <person name="Doolittle W.F."/>
            <person name="Charlebois R.L."/>
            <person name="Legault B."/>
            <person name="Rodriguez-Valera F."/>
        </authorList>
    </citation>
    <scope>NUCLEOTIDE SEQUENCE [LARGE SCALE GENOMIC DNA]</scope>
    <source>
        <strain>DSM 13855 / CECT 5946 / M31</strain>
    </source>
</reference>
<dbReference type="EC" id="4.2.3.4" evidence="1"/>
<dbReference type="EMBL" id="CP000159">
    <property type="protein sequence ID" value="ABC44239.1"/>
    <property type="molecule type" value="Genomic_DNA"/>
</dbReference>
<dbReference type="RefSeq" id="WP_011404274.1">
    <property type="nucleotide sequence ID" value="NC_007677.1"/>
</dbReference>
<dbReference type="RefSeq" id="YP_445648.1">
    <property type="nucleotide sequence ID" value="NC_007677.1"/>
</dbReference>
<dbReference type="SMR" id="Q2S2D3"/>
<dbReference type="STRING" id="309807.SRU_1526"/>
<dbReference type="EnsemblBacteria" id="ABC44239">
    <property type="protein sequence ID" value="ABC44239"/>
    <property type="gene ID" value="SRU_1526"/>
</dbReference>
<dbReference type="KEGG" id="sru:SRU_1526"/>
<dbReference type="PATRIC" id="fig|309807.25.peg.1581"/>
<dbReference type="eggNOG" id="COG0337">
    <property type="taxonomic scope" value="Bacteria"/>
</dbReference>
<dbReference type="HOGENOM" id="CLU_001201_0_2_10"/>
<dbReference type="OrthoDB" id="9806583at2"/>
<dbReference type="UniPathway" id="UPA00053">
    <property type="reaction ID" value="UER00085"/>
</dbReference>
<dbReference type="Proteomes" id="UP000008674">
    <property type="component" value="Chromosome"/>
</dbReference>
<dbReference type="GO" id="GO:0005737">
    <property type="term" value="C:cytoplasm"/>
    <property type="evidence" value="ECO:0007669"/>
    <property type="project" value="UniProtKB-SubCell"/>
</dbReference>
<dbReference type="GO" id="GO:0003856">
    <property type="term" value="F:3-dehydroquinate synthase activity"/>
    <property type="evidence" value="ECO:0007669"/>
    <property type="project" value="UniProtKB-UniRule"/>
</dbReference>
<dbReference type="GO" id="GO:0046872">
    <property type="term" value="F:metal ion binding"/>
    <property type="evidence" value="ECO:0007669"/>
    <property type="project" value="UniProtKB-KW"/>
</dbReference>
<dbReference type="GO" id="GO:0000166">
    <property type="term" value="F:nucleotide binding"/>
    <property type="evidence" value="ECO:0007669"/>
    <property type="project" value="UniProtKB-KW"/>
</dbReference>
<dbReference type="GO" id="GO:0008652">
    <property type="term" value="P:amino acid biosynthetic process"/>
    <property type="evidence" value="ECO:0007669"/>
    <property type="project" value="UniProtKB-KW"/>
</dbReference>
<dbReference type="GO" id="GO:0009073">
    <property type="term" value="P:aromatic amino acid family biosynthetic process"/>
    <property type="evidence" value="ECO:0007669"/>
    <property type="project" value="UniProtKB-KW"/>
</dbReference>
<dbReference type="GO" id="GO:0009423">
    <property type="term" value="P:chorismate biosynthetic process"/>
    <property type="evidence" value="ECO:0007669"/>
    <property type="project" value="UniProtKB-UniRule"/>
</dbReference>
<dbReference type="CDD" id="cd08195">
    <property type="entry name" value="DHQS"/>
    <property type="match status" value="1"/>
</dbReference>
<dbReference type="FunFam" id="3.40.50.1970:FF:000007">
    <property type="entry name" value="Pentafunctional AROM polypeptide"/>
    <property type="match status" value="1"/>
</dbReference>
<dbReference type="Gene3D" id="3.40.50.1970">
    <property type="match status" value="1"/>
</dbReference>
<dbReference type="Gene3D" id="1.20.1090.10">
    <property type="entry name" value="Dehydroquinate synthase-like - alpha domain"/>
    <property type="match status" value="1"/>
</dbReference>
<dbReference type="HAMAP" id="MF_00110">
    <property type="entry name" value="DHQ_synthase"/>
    <property type="match status" value="1"/>
</dbReference>
<dbReference type="InterPro" id="IPR050071">
    <property type="entry name" value="Dehydroquinate_synthase"/>
</dbReference>
<dbReference type="InterPro" id="IPR016037">
    <property type="entry name" value="DHQ_synth_AroB"/>
</dbReference>
<dbReference type="InterPro" id="IPR030963">
    <property type="entry name" value="DHQ_synth_fam"/>
</dbReference>
<dbReference type="InterPro" id="IPR030960">
    <property type="entry name" value="DHQS/DOIS_N"/>
</dbReference>
<dbReference type="InterPro" id="IPR056179">
    <property type="entry name" value="DHQS_C"/>
</dbReference>
<dbReference type="NCBIfam" id="TIGR01357">
    <property type="entry name" value="aroB"/>
    <property type="match status" value="1"/>
</dbReference>
<dbReference type="PANTHER" id="PTHR43622">
    <property type="entry name" value="3-DEHYDROQUINATE SYNTHASE"/>
    <property type="match status" value="1"/>
</dbReference>
<dbReference type="PANTHER" id="PTHR43622:SF7">
    <property type="entry name" value="3-DEHYDROQUINATE SYNTHASE, CHLOROPLASTIC"/>
    <property type="match status" value="1"/>
</dbReference>
<dbReference type="Pfam" id="PF01761">
    <property type="entry name" value="DHQ_synthase"/>
    <property type="match status" value="1"/>
</dbReference>
<dbReference type="Pfam" id="PF24621">
    <property type="entry name" value="DHQS_C"/>
    <property type="match status" value="1"/>
</dbReference>
<dbReference type="PIRSF" id="PIRSF001455">
    <property type="entry name" value="DHQ_synth"/>
    <property type="match status" value="1"/>
</dbReference>
<dbReference type="SUPFAM" id="SSF56796">
    <property type="entry name" value="Dehydroquinate synthase-like"/>
    <property type="match status" value="1"/>
</dbReference>
<keyword id="KW-0028">Amino-acid biosynthesis</keyword>
<keyword id="KW-0057">Aromatic amino acid biosynthesis</keyword>
<keyword id="KW-0170">Cobalt</keyword>
<keyword id="KW-0963">Cytoplasm</keyword>
<keyword id="KW-0456">Lyase</keyword>
<keyword id="KW-0479">Metal-binding</keyword>
<keyword id="KW-0520">NAD</keyword>
<keyword id="KW-0547">Nucleotide-binding</keyword>
<keyword id="KW-1185">Reference proteome</keyword>
<keyword id="KW-0862">Zinc</keyword>
<protein>
    <recommendedName>
        <fullName evidence="1">3-dehydroquinate synthase</fullName>
        <shortName evidence="1">DHQS</shortName>
        <ecNumber evidence="1">4.2.3.4</ecNumber>
    </recommendedName>
</protein>
<gene>
    <name evidence="1" type="primary">aroB</name>
    <name type="ordered locus">SRU_1526</name>
</gene>
<organism>
    <name type="scientific">Salinibacter ruber (strain DSM 13855 / M31)</name>
    <dbReference type="NCBI Taxonomy" id="309807"/>
    <lineage>
        <taxon>Bacteria</taxon>
        <taxon>Pseudomonadati</taxon>
        <taxon>Rhodothermota</taxon>
        <taxon>Rhodothermia</taxon>
        <taxon>Rhodothermales</taxon>
        <taxon>Salinibacteraceae</taxon>
        <taxon>Salinibacter</taxon>
    </lineage>
</organism>